<evidence type="ECO:0000255" key="1">
    <source>
        <dbReference type="HAMAP-Rule" id="MF_01871"/>
    </source>
</evidence>
<protein>
    <recommendedName>
        <fullName evidence="1">Probable inorganic carbon transporter subunit DabA</fullName>
    </recommendedName>
</protein>
<comment type="function">
    <text evidence="1">Part of an energy-coupled inorganic carbon pump.</text>
</comment>
<comment type="cofactor">
    <cofactor evidence="1">
        <name>Zn(2+)</name>
        <dbReference type="ChEBI" id="CHEBI:29105"/>
    </cofactor>
</comment>
<comment type="subunit">
    <text evidence="1">Forms a complex with DabB.</text>
</comment>
<comment type="subcellular location">
    <subcellularLocation>
        <location evidence="1">Cell inner membrane</location>
        <topology evidence="1">Peripheral membrane protein</topology>
    </subcellularLocation>
</comment>
<comment type="similarity">
    <text evidence="1">Belongs to the inorganic carbon transporter (TC 9.A.2) DabA family.</text>
</comment>
<gene>
    <name evidence="1" type="primary">dabA</name>
    <name type="ordered locus">Daro_0565</name>
</gene>
<proteinExistence type="inferred from homology"/>
<name>DABA_DECAR</name>
<feature type="chain" id="PRO_0000387260" description="Probable inorganic carbon transporter subunit DabA">
    <location>
        <begin position="1"/>
        <end position="1012"/>
    </location>
</feature>
<feature type="binding site" evidence="1">
    <location>
        <position position="489"/>
    </location>
    <ligand>
        <name>Zn(2+)</name>
        <dbReference type="ChEBI" id="CHEBI:29105"/>
    </ligand>
</feature>
<feature type="binding site" evidence="1">
    <location>
        <position position="491"/>
    </location>
    <ligand>
        <name>Zn(2+)</name>
        <dbReference type="ChEBI" id="CHEBI:29105"/>
    </ligand>
</feature>
<feature type="binding site" evidence="1">
    <location>
        <position position="679"/>
    </location>
    <ligand>
        <name>Zn(2+)</name>
        <dbReference type="ChEBI" id="CHEBI:29105"/>
    </ligand>
</feature>
<feature type="binding site" evidence="1">
    <location>
        <position position="694"/>
    </location>
    <ligand>
        <name>Zn(2+)</name>
        <dbReference type="ChEBI" id="CHEBI:29105"/>
    </ligand>
</feature>
<dbReference type="EMBL" id="CP000089">
    <property type="protein sequence ID" value="AAZ45322.1"/>
    <property type="molecule type" value="Genomic_DNA"/>
</dbReference>
<dbReference type="STRING" id="159087.Daro_0565"/>
<dbReference type="KEGG" id="dar:Daro_0565"/>
<dbReference type="eggNOG" id="COG3002">
    <property type="taxonomic scope" value="Bacteria"/>
</dbReference>
<dbReference type="HOGENOM" id="CLU_009885_0_0_4"/>
<dbReference type="OrthoDB" id="9805101at2"/>
<dbReference type="GO" id="GO:0005886">
    <property type="term" value="C:plasma membrane"/>
    <property type="evidence" value="ECO:0007669"/>
    <property type="project" value="UniProtKB-SubCell"/>
</dbReference>
<dbReference type="GO" id="GO:0008270">
    <property type="term" value="F:zinc ion binding"/>
    <property type="evidence" value="ECO:0007669"/>
    <property type="project" value="UniProtKB-UniRule"/>
</dbReference>
<dbReference type="HAMAP" id="MF_01871">
    <property type="entry name" value="DabA"/>
    <property type="match status" value="1"/>
</dbReference>
<dbReference type="InterPro" id="IPR018752">
    <property type="entry name" value="DabA"/>
</dbReference>
<dbReference type="PANTHER" id="PTHR38344:SF1">
    <property type="entry name" value="INORGANIC CARBON TRANSPORTER SUBUNIT DABA-RELATED"/>
    <property type="match status" value="1"/>
</dbReference>
<dbReference type="PANTHER" id="PTHR38344">
    <property type="entry name" value="UPF0753 PROTEIN AQ_863"/>
    <property type="match status" value="1"/>
</dbReference>
<dbReference type="Pfam" id="PF10070">
    <property type="entry name" value="DabA"/>
    <property type="match status" value="1"/>
</dbReference>
<reference key="1">
    <citation type="journal article" date="2009" name="BMC Genomics">
        <title>Metabolic analysis of the soil microbe Dechloromonas aromatica str. RCB: indications of a surprisingly complex life-style and cryptic anaerobic pathways for aromatic degradation.</title>
        <authorList>
            <person name="Salinero K.K."/>
            <person name="Keller K."/>
            <person name="Feil W.S."/>
            <person name="Feil H."/>
            <person name="Trong S."/>
            <person name="Di Bartolo G."/>
            <person name="Lapidus A."/>
        </authorList>
    </citation>
    <scope>NUCLEOTIDE SEQUENCE [LARGE SCALE GENOMIC DNA]</scope>
    <source>
        <strain>RCB</strain>
    </source>
</reference>
<organism>
    <name type="scientific">Dechloromonas aromatica (strain RCB)</name>
    <dbReference type="NCBI Taxonomy" id="159087"/>
    <lineage>
        <taxon>Bacteria</taxon>
        <taxon>Pseudomonadati</taxon>
        <taxon>Pseudomonadota</taxon>
        <taxon>Betaproteobacteria</taxon>
        <taxon>Rhodocyclales</taxon>
        <taxon>Azonexaceae</taxon>
        <taxon>Dechloromonas</taxon>
    </lineage>
</organism>
<sequence length="1012" mass="111281">MSAAHELPIRERLAHWVEHLTHVLPAQAPIRDFVHHNTLHGFQHLPFTEALASAQALTGATTYWPESRFRECLASGRISPDDLSAALDDFGVGDLDQPVVRNLTRRDILLASLRFGCEAPNACRQAWLLDETSLADDPLFAYFCRSVELAPSKGASENWQVQALARWDALCGRVGRTWTWRALLEYLSGEDVLEWTRSILQRHLAAHLDLGVAAWRNPAQGQGFFAAWRASAGLDMAWEMDELPNARDEILHLPDSPLDVLLEELPRLVPDHSQWYGYLERLSLELPGWSGMFLWRDRNPGRGDGTPIAMLDYLTVRVLLERLLTDDLLRRLAGSPLSLAELHAYYAARPEEFLVRAALHEPGLPEDLLGRAAHLVQLAREGHVDVAEWRRLAAALAPAMAAAQDDGAAWQMAGLSRQLGLTPADLEMLSGDDLTALQTCAASLSSLQRGHIWLLAYERHYREQLFSALTANHPRQATPAAPSAQVVMCMDDREEGTRRHLEEIAPDVATYGAAGFFGVPMFWQGLDDAGKTALCPVVVQPTHLLRELPAAGEEGSLAGHAARREKRLRWNERLYQATRRRAVAGPVLTALGAVPALASLLAVTLVPGWFGETARRWREQYEGRVSTRLGLTAEQPVAATPEQPQLGLTDAEQIERVEAFLRMIGLTAGFAPLVLMFGHGSGSQNNPHLSAYDCGACSGKHGGPNARVFAAMANRPAVRAGLAARGLSIPDSTWFVAAEHNTCDDGIEWYDLDSTPERFQAAVDRLLGQMAEACRAHAAERCRRLASAPFKPSPWKARQHMIGRANDISQARPELGHATNAAAFIGRRQMSRGLFLDRRVFLISYDPVGDDDGCIVEGILLAAGPVGAGIALEYYFSTVDNERFGCGSKITHNITGLFGVMEGADSDLRTGLPWQMVEIHEPMRLLVVVEQTPEVLTAIVGRQPPLQELINNEWIIVAAKHPITGAIDLYCPRRGWLPWSGQAVLPQVARSVDWFAGESQPLAPAIILGGVR</sequence>
<keyword id="KW-0997">Cell inner membrane</keyword>
<keyword id="KW-1003">Cell membrane</keyword>
<keyword id="KW-0472">Membrane</keyword>
<keyword id="KW-0479">Metal-binding</keyword>
<keyword id="KW-0813">Transport</keyword>
<keyword id="KW-0862">Zinc</keyword>
<accession>Q47IK9</accession>